<feature type="chain" id="PRO_0000307132" description="FERM and PDZ domain-containing protein 4">
    <location>
        <begin position="1"/>
        <end position="1322"/>
    </location>
</feature>
<feature type="domain" description="WW" evidence="3">
    <location>
        <begin position="33"/>
        <end position="66"/>
    </location>
</feature>
<feature type="domain" description="PDZ" evidence="2">
    <location>
        <begin position="78"/>
        <end position="155"/>
    </location>
</feature>
<feature type="domain" description="FERM" evidence="1">
    <location>
        <begin position="204"/>
        <end position="519"/>
    </location>
</feature>
<feature type="region of interest" description="Disordered" evidence="4">
    <location>
        <begin position="809"/>
        <end position="847"/>
    </location>
</feature>
<feature type="region of interest" description="Disordered" evidence="4">
    <location>
        <begin position="900"/>
        <end position="927"/>
    </location>
</feature>
<feature type="region of interest" description="Disordered" evidence="4">
    <location>
        <begin position="952"/>
        <end position="983"/>
    </location>
</feature>
<feature type="region of interest" description="Disordered" evidence="4">
    <location>
        <begin position="1027"/>
        <end position="1080"/>
    </location>
</feature>
<feature type="region of interest" description="Disordered" evidence="4">
    <location>
        <begin position="1105"/>
        <end position="1148"/>
    </location>
</feature>
<feature type="region of interest" description="Disordered" evidence="4">
    <location>
        <begin position="1160"/>
        <end position="1180"/>
    </location>
</feature>
<feature type="region of interest" description="Disordered" evidence="4">
    <location>
        <begin position="1207"/>
        <end position="1227"/>
    </location>
</feature>
<feature type="compositionally biased region" description="Low complexity" evidence="4">
    <location>
        <begin position="902"/>
        <end position="921"/>
    </location>
</feature>
<feature type="compositionally biased region" description="Low complexity" evidence="4">
    <location>
        <begin position="1041"/>
        <end position="1054"/>
    </location>
</feature>
<feature type="compositionally biased region" description="Polar residues" evidence="4">
    <location>
        <begin position="1067"/>
        <end position="1080"/>
    </location>
</feature>
<feature type="compositionally biased region" description="Polar residues" evidence="4">
    <location>
        <begin position="1207"/>
        <end position="1217"/>
    </location>
</feature>
<feature type="sequence variant" id="VAR_077481" description="In XLID104; dbSNP:rs886038209." evidence="6">
    <original>C</original>
    <variation>R</variation>
    <location>
        <position position="553"/>
    </location>
</feature>
<feature type="mutagenesis site" description="Abolishes the interaction with ARHGEF7. Mutant overexpression in cultured neurons does not induce a significant increase in spine density contrary to wild type." evidence="5">
    <original>R</original>
    <variation>A</variation>
    <location>
        <position position="102"/>
    </location>
</feature>
<feature type="mutagenesis site" description="Nearly abolishes interaction with GPSM2; when associated with 1010-A-A-1011." evidence="7">
    <original>L</original>
    <variation>A</variation>
    <location>
        <position position="990"/>
    </location>
</feature>
<feature type="mutagenesis site" description="Nearly abolishes interaction with GPSM2; when associated with A-990." evidence="7">
    <original>YF</original>
    <variation>AA</variation>
    <location>
        <begin position="1010"/>
        <end position="1011"/>
    </location>
</feature>
<feature type="mutagenesis site" description="Abolishes the interaction with DLG1, DLG2, DLG3 and DLG4/PSD95. Reduces protein localization to dendritic spines." evidence="5">
    <location>
        <begin position="1319"/>
        <end position="1322"/>
    </location>
</feature>
<feature type="mutagenesis site" description="Abolishes the interaction with DLG4/PSD95. Reduces protein localization to dendritic spines." evidence="5">
    <original>T</original>
    <variation>D</variation>
    <location>
        <position position="1320"/>
    </location>
</feature>
<feature type="sequence conflict" description="In Ref. 1; BAA20774." evidence="8" ref="1">
    <original>A</original>
    <variation>T</variation>
    <location>
        <position position="130"/>
    </location>
</feature>
<feature type="strand" evidence="14">
    <location>
        <begin position="198"/>
        <end position="202"/>
    </location>
</feature>
<feature type="strand" evidence="14">
    <location>
        <begin position="205"/>
        <end position="209"/>
    </location>
</feature>
<feature type="strand" evidence="14">
    <location>
        <begin position="215"/>
        <end position="219"/>
    </location>
</feature>
<feature type="helix" evidence="14">
    <location>
        <begin position="226"/>
        <end position="237"/>
    </location>
</feature>
<feature type="helix" evidence="14">
    <location>
        <begin position="242"/>
        <end position="244"/>
    </location>
</feature>
<feature type="strand" evidence="14">
    <location>
        <begin position="245"/>
        <end position="252"/>
    </location>
</feature>
<feature type="strand" evidence="14">
    <location>
        <begin position="254"/>
        <end position="256"/>
    </location>
</feature>
<feature type="strand" evidence="14">
    <location>
        <begin position="258"/>
        <end position="263"/>
    </location>
</feature>
<feature type="helix" evidence="14">
    <location>
        <begin position="269"/>
        <end position="272"/>
    </location>
</feature>
<feature type="helix" evidence="14">
    <location>
        <begin position="278"/>
        <end position="280"/>
    </location>
</feature>
<feature type="strand" evidence="14">
    <location>
        <begin position="281"/>
        <end position="287"/>
    </location>
</feature>
<feature type="helix" evidence="14">
    <location>
        <begin position="294"/>
        <end position="300"/>
    </location>
</feature>
<feature type="helix" evidence="14">
    <location>
        <begin position="302"/>
        <end position="317"/>
    </location>
</feature>
<feature type="helix" evidence="14">
    <location>
        <begin position="327"/>
        <end position="343"/>
    </location>
</feature>
<feature type="helix" evidence="14">
    <location>
        <begin position="353"/>
        <end position="359"/>
    </location>
</feature>
<feature type="helix" evidence="14">
    <location>
        <begin position="362"/>
        <end position="365"/>
    </location>
</feature>
<feature type="helix" evidence="14">
    <location>
        <begin position="368"/>
        <end position="373"/>
    </location>
</feature>
<feature type="helix" evidence="14">
    <location>
        <begin position="376"/>
        <end position="393"/>
    </location>
</feature>
<feature type="helix" evidence="14">
    <location>
        <begin position="402"/>
        <end position="414"/>
    </location>
</feature>
<feature type="turn" evidence="14">
    <location>
        <begin position="417"/>
        <end position="420"/>
    </location>
</feature>
<feature type="strand" evidence="14">
    <location>
        <begin position="422"/>
        <end position="430"/>
    </location>
</feature>
<feature type="strand" evidence="14">
    <location>
        <begin position="433"/>
        <end position="442"/>
    </location>
</feature>
<feature type="turn" evidence="14">
    <location>
        <begin position="443"/>
        <end position="445"/>
    </location>
</feature>
<feature type="strand" evidence="14">
    <location>
        <begin position="446"/>
        <end position="452"/>
    </location>
</feature>
<feature type="turn" evidence="14">
    <location>
        <begin position="453"/>
        <end position="456"/>
    </location>
</feature>
<feature type="strand" evidence="14">
    <location>
        <begin position="457"/>
        <end position="462"/>
    </location>
</feature>
<feature type="helix" evidence="14">
    <location>
        <begin position="464"/>
        <end position="466"/>
    </location>
</feature>
<feature type="strand" evidence="14">
    <location>
        <begin position="467"/>
        <end position="472"/>
    </location>
</feature>
<feature type="strand" evidence="14">
    <location>
        <begin position="476"/>
        <end position="486"/>
    </location>
</feature>
<feature type="strand" evidence="14">
    <location>
        <begin position="492"/>
        <end position="497"/>
    </location>
</feature>
<feature type="helix" evidence="14">
    <location>
        <begin position="498"/>
        <end position="515"/>
    </location>
</feature>
<feature type="helix" evidence="13">
    <location>
        <begin position="1007"/>
        <end position="1009"/>
    </location>
</feature>
<gene>
    <name type="primary">FRMPD4</name>
    <name type="synonym">KIAA0316</name>
    <name type="synonym">PDZD10</name>
    <name type="synonym">PDZK10</name>
</gene>
<sequence>MDVFSFVKIAKLSSHRTKSSGWPPPSGTWGLSQVPPYGWEMTANRDGRDYFINHMTQAIPFDDPRLESCQIIPPAPRKVEMRRDPVLGFGFVAGSEKPVVVRSVTPGGPSEGKLIPGDQIVMINDEPVSAAPRERVIDLVRSCKESILLTVIQPYPSPKSAFISAAKKARLKSNPVKVRFSEEVIINGQVSETVKDNSLLFMPNVLKVYLENGQTKSFRFDCSTSIKDVILTLQEKLSIKGIEHFSLMLEQRTEGAGTKLLLLHEQETLTQVTQRPSSHKMRCLFRISFVPKDPIDLLRRDPVAFEYLYVQSCNDVVQERFGPELKYDIALRLAALQMYIATVTTKQTQKISLKYIEKEWGLETFLPSAVLQSMKEKNIKKALSHLVKANQNLVPPGKKLSALQAKVHYLKFLSDLRLYGGRVFKATLVQAEKRSEVTLLVGPRYGISHVINTKTNLVALLADFSHVNRIEMFSEEESLVRVELHVLDVKPITLLMESSDAMNLACLTAGYYRLLVDSRRSIFNMANKKNTATQETGPENKGKHNLLGPDWNCIPQMTTFIGEGEQEAQITYIDSKQKTVEITDSTMCPKEHRHLYIDNAYSSDGLNQQLSQPGEAPCEADYRSLAQRSLLTLSGPETLKKAQESPRGAKVSFIFGDFALDDGISPPTLGYETLLDEGPEMLEKQRNLYIGSANDMKGLDLTPEAEGIQFVENSVYANIGDVKSFQAAEGIEEPLLHDICYAENTDDAEDEDEVSCEEDLVVGEMNQPAILNLSGSSDDIIDLTSLPPPEGDDNEDDFLLRSLNMAIAAPPPGFRDSSDEEDSQSQAASFPEDKEKGSSLQNDEIPVSLIDAVPTSAEGKCEKGLDNAVVSTLGALEALSVSEEQQTSDNSGVAILRAYSPESSSDSGNETNSSEMTESSELATAQKQSENLSRMFLATHEGYHPLAEEQTEFPASKTPAGGLPPKSSHALAARPATDLPPKVVPSKQLLHSDHMEMEPETMETKSVTDYFSKLHMGSVAYSCTSKRKSKLADGEGKAPPNGNTTGKKQQGTKTAEMEEEASGKFGTVSSRDSQHLSTFNLERTAFRKDSQRWYVATEGGMAEKSGLEAATGKTFPRASGLGAREAEGKEEGAPDGETSDGSGLGQGDRFLTDVTCASSAKDLDNPEDADSSTCDHPSKLPEADESVARLCDYHLAKRMSSLQSEGHFSLQSSQGSSVDAGCGTGSSGSACATPVESPLCPSLGKHLIPDASGKGVNYIPSEERAPGLPNHGATFKELHPQTEGMCPRMTVPALHTAINTEPLFGTLRDGCHRLPKIKETTV</sequence>
<protein>
    <recommendedName>
        <fullName>FERM and PDZ domain-containing protein 4</fullName>
    </recommendedName>
    <alternativeName>
        <fullName>PDZ domain-containing protein 10</fullName>
    </alternativeName>
    <alternativeName>
        <fullName>PSD-95-interacting regulator of spine morphogenesis</fullName>
        <shortName>Preso</shortName>
    </alternativeName>
</protein>
<reference key="1">
    <citation type="journal article" date="1997" name="DNA Res.">
        <title>Prediction of the coding sequences of unidentified human genes. VII. The complete sequences of 100 new cDNA clones from brain which can code for large proteins in vitro.</title>
        <authorList>
            <person name="Nagase T."/>
            <person name="Ishikawa K."/>
            <person name="Nakajima D."/>
            <person name="Ohira M."/>
            <person name="Seki N."/>
            <person name="Miyajima N."/>
            <person name="Tanaka A."/>
            <person name="Kotani H."/>
            <person name="Nomura N."/>
            <person name="Ohara O."/>
        </authorList>
    </citation>
    <scope>NUCLEOTIDE SEQUENCE [LARGE SCALE MRNA]</scope>
    <source>
        <tissue>Brain</tissue>
    </source>
</reference>
<reference key="2">
    <citation type="submission" date="2003-01" db="EMBL/GenBank/DDBJ databases">
        <authorList>
            <person name="Ohara O."/>
            <person name="Nagase T."/>
            <person name="Kikuno R."/>
            <person name="Nomura N."/>
        </authorList>
    </citation>
    <scope>SEQUENCE REVISION</scope>
</reference>
<reference key="3">
    <citation type="journal article" date="2004" name="Nat. Genet.">
        <title>Complete sequencing and characterization of 21,243 full-length human cDNAs.</title>
        <authorList>
            <person name="Ota T."/>
            <person name="Suzuki Y."/>
            <person name="Nishikawa T."/>
            <person name="Otsuki T."/>
            <person name="Sugiyama T."/>
            <person name="Irie R."/>
            <person name="Wakamatsu A."/>
            <person name="Hayashi K."/>
            <person name="Sato H."/>
            <person name="Nagai K."/>
            <person name="Kimura K."/>
            <person name="Makita H."/>
            <person name="Sekine M."/>
            <person name="Obayashi M."/>
            <person name="Nishi T."/>
            <person name="Shibahara T."/>
            <person name="Tanaka T."/>
            <person name="Ishii S."/>
            <person name="Yamamoto J."/>
            <person name="Saito K."/>
            <person name="Kawai Y."/>
            <person name="Isono Y."/>
            <person name="Nakamura Y."/>
            <person name="Nagahari K."/>
            <person name="Murakami K."/>
            <person name="Yasuda T."/>
            <person name="Iwayanagi T."/>
            <person name="Wagatsuma M."/>
            <person name="Shiratori A."/>
            <person name="Sudo H."/>
            <person name="Hosoiri T."/>
            <person name="Kaku Y."/>
            <person name="Kodaira H."/>
            <person name="Kondo H."/>
            <person name="Sugawara M."/>
            <person name="Takahashi M."/>
            <person name="Kanda K."/>
            <person name="Yokoi T."/>
            <person name="Furuya T."/>
            <person name="Kikkawa E."/>
            <person name="Omura Y."/>
            <person name="Abe K."/>
            <person name="Kamihara K."/>
            <person name="Katsuta N."/>
            <person name="Sato K."/>
            <person name="Tanikawa M."/>
            <person name="Yamazaki M."/>
            <person name="Ninomiya K."/>
            <person name="Ishibashi T."/>
            <person name="Yamashita H."/>
            <person name="Murakawa K."/>
            <person name="Fujimori K."/>
            <person name="Tanai H."/>
            <person name="Kimata M."/>
            <person name="Watanabe M."/>
            <person name="Hiraoka S."/>
            <person name="Chiba Y."/>
            <person name="Ishida S."/>
            <person name="Ono Y."/>
            <person name="Takiguchi S."/>
            <person name="Watanabe S."/>
            <person name="Yosida M."/>
            <person name="Hotuta T."/>
            <person name="Kusano J."/>
            <person name="Kanehori K."/>
            <person name="Takahashi-Fujii A."/>
            <person name="Hara H."/>
            <person name="Tanase T.-O."/>
            <person name="Nomura Y."/>
            <person name="Togiya S."/>
            <person name="Komai F."/>
            <person name="Hara R."/>
            <person name="Takeuchi K."/>
            <person name="Arita M."/>
            <person name="Imose N."/>
            <person name="Musashino K."/>
            <person name="Yuuki H."/>
            <person name="Oshima A."/>
            <person name="Sasaki N."/>
            <person name="Aotsuka S."/>
            <person name="Yoshikawa Y."/>
            <person name="Matsunawa H."/>
            <person name="Ichihara T."/>
            <person name="Shiohata N."/>
            <person name="Sano S."/>
            <person name="Moriya S."/>
            <person name="Momiyama H."/>
            <person name="Satoh N."/>
            <person name="Takami S."/>
            <person name="Terashima Y."/>
            <person name="Suzuki O."/>
            <person name="Nakagawa S."/>
            <person name="Senoh A."/>
            <person name="Mizoguchi H."/>
            <person name="Goto Y."/>
            <person name="Shimizu F."/>
            <person name="Wakebe H."/>
            <person name="Hishigaki H."/>
            <person name="Watanabe T."/>
            <person name="Sugiyama A."/>
            <person name="Takemoto M."/>
            <person name="Kawakami B."/>
            <person name="Yamazaki M."/>
            <person name="Watanabe K."/>
            <person name="Kumagai A."/>
            <person name="Itakura S."/>
            <person name="Fukuzumi Y."/>
            <person name="Fujimori Y."/>
            <person name="Komiyama M."/>
            <person name="Tashiro H."/>
            <person name="Tanigami A."/>
            <person name="Fujiwara T."/>
            <person name="Ono T."/>
            <person name="Yamada K."/>
            <person name="Fujii Y."/>
            <person name="Ozaki K."/>
            <person name="Hirao M."/>
            <person name="Ohmori Y."/>
            <person name="Kawabata A."/>
            <person name="Hikiji T."/>
            <person name="Kobatake N."/>
            <person name="Inagaki H."/>
            <person name="Ikema Y."/>
            <person name="Okamoto S."/>
            <person name="Okitani R."/>
            <person name="Kawakami T."/>
            <person name="Noguchi S."/>
            <person name="Itoh T."/>
            <person name="Shigeta K."/>
            <person name="Senba T."/>
            <person name="Matsumura K."/>
            <person name="Nakajima Y."/>
            <person name="Mizuno T."/>
            <person name="Morinaga M."/>
            <person name="Sasaki M."/>
            <person name="Togashi T."/>
            <person name="Oyama M."/>
            <person name="Hata H."/>
            <person name="Watanabe M."/>
            <person name="Komatsu T."/>
            <person name="Mizushima-Sugano J."/>
            <person name="Satoh T."/>
            <person name="Shirai Y."/>
            <person name="Takahashi Y."/>
            <person name="Nakagawa K."/>
            <person name="Okumura K."/>
            <person name="Nagase T."/>
            <person name="Nomura N."/>
            <person name="Kikuchi H."/>
            <person name="Masuho Y."/>
            <person name="Yamashita R."/>
            <person name="Nakai K."/>
            <person name="Yada T."/>
            <person name="Nakamura Y."/>
            <person name="Ohara O."/>
            <person name="Isogai T."/>
            <person name="Sugano S."/>
        </authorList>
    </citation>
    <scope>NUCLEOTIDE SEQUENCE [LARGE SCALE MRNA]</scope>
    <source>
        <tissue>Amygdala</tissue>
    </source>
</reference>
<reference key="4">
    <citation type="journal article" date="2004" name="Genome Res.">
        <title>The status, quality, and expansion of the NIH full-length cDNA project: the Mammalian Gene Collection (MGC).</title>
        <authorList>
            <consortium name="The MGC Project Team"/>
        </authorList>
    </citation>
    <scope>NUCLEOTIDE SEQUENCE [LARGE SCALE MRNA]</scope>
    <source>
        <tissue>Brain</tissue>
    </source>
</reference>
<reference key="5">
    <citation type="journal article" date="2008" name="J. Neurosci.">
        <title>Preso, a novel PSD-95-interacting FERM and PDZ domain protein that regulates dendritic spine morphogenesis.</title>
        <authorList>
            <person name="Lee H.W."/>
            <person name="Choi J."/>
            <person name="Shin H."/>
            <person name="Kim K."/>
            <person name="Yang J."/>
            <person name="Na M."/>
            <person name="Choi S.Y."/>
            <person name="Kang G.B."/>
            <person name="Eom S.H."/>
            <person name="Kim H."/>
            <person name="Kim E."/>
        </authorList>
    </citation>
    <scope>FUNCTION</scope>
    <scope>INTERACTION WITH DLG1; DLG2; DLG3; DLG4; ARHGEF7 AND PHOSPHATIDYLINOSITOL-4,5-BIPHOSPHATE</scope>
    <scope>DOMAIN FERM</scope>
    <scope>SUBCELLULAR LOCATION</scope>
    <scope>MUTAGENESIS OF ARG-102; 1319-GLU--VAL-1322 AND THR-1320</scope>
</reference>
<reference key="6">
    <citation type="journal article" date="2009" name="Sci. Signal.">
        <title>Quantitative phosphoproteomic analysis of T cell receptor signaling reveals system-wide modulation of protein-protein interactions.</title>
        <authorList>
            <person name="Mayya V."/>
            <person name="Lundgren D.H."/>
            <person name="Hwang S.-I."/>
            <person name="Rezaul K."/>
            <person name="Wu L."/>
            <person name="Eng J.K."/>
            <person name="Rodionov V."/>
            <person name="Han D.K."/>
        </authorList>
    </citation>
    <scope>IDENTIFICATION BY MASS SPECTROMETRY [LARGE SCALE ANALYSIS]</scope>
    <source>
        <tissue>Leukemic T-cell</tissue>
    </source>
</reference>
<reference key="7">
    <citation type="journal article" date="2016" name="Mol. Psychiatry">
        <title>X-exome sequencing of 405 unresolved families identifies seven novel intellectual disability genes.</title>
        <authorList>
            <person name="Hu H."/>
            <person name="Haas S.A."/>
            <person name="Chelly J."/>
            <person name="Van Esch H."/>
            <person name="Raynaud M."/>
            <person name="de Brouwer A.P."/>
            <person name="Weinert S."/>
            <person name="Froyen G."/>
            <person name="Frints S.G."/>
            <person name="Laumonnier F."/>
            <person name="Zemojtel T."/>
            <person name="Love M.I."/>
            <person name="Richard H."/>
            <person name="Emde A.K."/>
            <person name="Bienek M."/>
            <person name="Jensen C."/>
            <person name="Hambrock M."/>
            <person name="Fischer U."/>
            <person name="Langnick C."/>
            <person name="Feldkamp M."/>
            <person name="Wissink-Lindhout W."/>
            <person name="Lebrun N."/>
            <person name="Castelnau L."/>
            <person name="Rucci J."/>
            <person name="Montjean R."/>
            <person name="Dorseuil O."/>
            <person name="Billuart P."/>
            <person name="Stuhlmann T."/>
            <person name="Shaw M."/>
            <person name="Corbett M.A."/>
            <person name="Gardner A."/>
            <person name="Willis-Owen S."/>
            <person name="Tan C."/>
            <person name="Friend K.L."/>
            <person name="Belet S."/>
            <person name="van Roozendaal K.E."/>
            <person name="Jimenez-Pocquet M."/>
            <person name="Moizard M.P."/>
            <person name="Ronce N."/>
            <person name="Sun R."/>
            <person name="O'Keeffe S."/>
            <person name="Chenna R."/>
            <person name="van Boemmel A."/>
            <person name="Goeke J."/>
            <person name="Hackett A."/>
            <person name="Field M."/>
            <person name="Christie L."/>
            <person name="Boyle J."/>
            <person name="Haan E."/>
            <person name="Nelson J."/>
            <person name="Turner G."/>
            <person name="Baynam G."/>
            <person name="Gillessen-Kaesbach G."/>
            <person name="Mueller U."/>
            <person name="Steinberger D."/>
            <person name="Budny B."/>
            <person name="Badura-Stronka M."/>
            <person name="Latos-Bielenska A."/>
            <person name="Ousager L.B."/>
            <person name="Wieacker P."/>
            <person name="Rodriguez Criado G."/>
            <person name="Bondeson M.L."/>
            <person name="Anneren G."/>
            <person name="Dufke A."/>
            <person name="Cohen M."/>
            <person name="Van Maldergem L."/>
            <person name="Vincent-Delorme C."/>
            <person name="Echenne B."/>
            <person name="Simon-Bouy B."/>
            <person name="Kleefstra T."/>
            <person name="Willemsen M."/>
            <person name="Fryns J.P."/>
            <person name="Devriendt K."/>
            <person name="Ullmann R."/>
            <person name="Vingron M."/>
            <person name="Wrogemann K."/>
            <person name="Wienker T.F."/>
            <person name="Tzschach A."/>
            <person name="van Bokhoven H."/>
            <person name="Gecz J."/>
            <person name="Jentsch T.J."/>
            <person name="Chen W."/>
            <person name="Ropers H.H."/>
            <person name="Kalscheuer V.M."/>
        </authorList>
    </citation>
    <scope>INVOLVEMENT IN XLID104</scope>
    <scope>VARIANT XLID104 ARG-553</scope>
</reference>
<reference evidence="9 10 11 12" key="8">
    <citation type="journal article" date="2015" name="Acta Crystallogr. F">
        <title>Structural basis for the recognition of the scaffold protein Frmpd4/Preso1 by the TPR domain of the adaptor protein LGN.</title>
        <authorList>
            <person name="Takayanagi H."/>
            <person name="Yuzawa S."/>
            <person name="Sumimoto H."/>
        </authorList>
    </citation>
    <scope>X-RAY CRYSTALLOGRAPHY (1.50 ANGSTROMS) OF 978-1025 IN COMPLEX WITH GPSM2</scope>
    <scope>INTERACTION WITH GPSM2</scope>
    <scope>MUTAGENESIS OF LEU-990 AND 1010-TYR-PHE-1011</scope>
</reference>
<name>FRPD4_HUMAN</name>
<organism>
    <name type="scientific">Homo sapiens</name>
    <name type="common">Human</name>
    <dbReference type="NCBI Taxonomy" id="9606"/>
    <lineage>
        <taxon>Eukaryota</taxon>
        <taxon>Metazoa</taxon>
        <taxon>Chordata</taxon>
        <taxon>Craniata</taxon>
        <taxon>Vertebrata</taxon>
        <taxon>Euteleostomi</taxon>
        <taxon>Mammalia</taxon>
        <taxon>Eutheria</taxon>
        <taxon>Euarchontoglires</taxon>
        <taxon>Primates</taxon>
        <taxon>Haplorrhini</taxon>
        <taxon>Catarrhini</taxon>
        <taxon>Hominidae</taxon>
        <taxon>Homo</taxon>
    </lineage>
</organism>
<proteinExistence type="evidence at protein level"/>
<evidence type="ECO:0000255" key="1">
    <source>
        <dbReference type="PROSITE-ProRule" id="PRU00084"/>
    </source>
</evidence>
<evidence type="ECO:0000255" key="2">
    <source>
        <dbReference type="PROSITE-ProRule" id="PRU00143"/>
    </source>
</evidence>
<evidence type="ECO:0000255" key="3">
    <source>
        <dbReference type="PROSITE-ProRule" id="PRU00224"/>
    </source>
</evidence>
<evidence type="ECO:0000256" key="4">
    <source>
        <dbReference type="SAM" id="MobiDB-lite"/>
    </source>
</evidence>
<evidence type="ECO:0000269" key="5">
    <source>
    </source>
</evidence>
<evidence type="ECO:0000269" key="6">
    <source>
    </source>
</evidence>
<evidence type="ECO:0000269" key="7">
    <source>
    </source>
</evidence>
<evidence type="ECO:0000305" key="8"/>
<evidence type="ECO:0007744" key="9">
    <source>
        <dbReference type="PDB" id="4WND"/>
    </source>
</evidence>
<evidence type="ECO:0007744" key="10">
    <source>
        <dbReference type="PDB" id="4WNE"/>
    </source>
</evidence>
<evidence type="ECO:0007744" key="11">
    <source>
        <dbReference type="PDB" id="4WNF"/>
    </source>
</evidence>
<evidence type="ECO:0007744" key="12">
    <source>
        <dbReference type="PDB" id="4WNG"/>
    </source>
</evidence>
<evidence type="ECO:0007829" key="13">
    <source>
        <dbReference type="PDB" id="4WND"/>
    </source>
</evidence>
<evidence type="ECO:0007829" key="14">
    <source>
        <dbReference type="PDB" id="7BYJ"/>
    </source>
</evidence>
<dbReference type="EMBL" id="AB002314">
    <property type="protein sequence ID" value="BAA20774.3"/>
    <property type="molecule type" value="mRNA"/>
</dbReference>
<dbReference type="EMBL" id="AK289694">
    <property type="protein sequence ID" value="BAF82383.1"/>
    <property type="molecule type" value="mRNA"/>
</dbReference>
<dbReference type="EMBL" id="BC113700">
    <property type="protein sequence ID" value="AAI13701.1"/>
    <property type="molecule type" value="mRNA"/>
</dbReference>
<dbReference type="EMBL" id="BC113702">
    <property type="protein sequence ID" value="AAI13703.1"/>
    <property type="molecule type" value="mRNA"/>
</dbReference>
<dbReference type="CCDS" id="CCDS35201.1"/>
<dbReference type="RefSeq" id="NP_055543.2">
    <property type="nucleotide sequence ID" value="NM_014728.3"/>
</dbReference>
<dbReference type="PDB" id="4WND">
    <property type="method" value="X-ray"/>
    <property type="resolution" value="1.50 A"/>
    <property type="chains" value="B=978-1025"/>
</dbReference>
<dbReference type="PDB" id="4WNE">
    <property type="method" value="X-ray"/>
    <property type="resolution" value="2.00 A"/>
    <property type="chains" value="B=987-1011"/>
</dbReference>
<dbReference type="PDB" id="4WNF">
    <property type="method" value="X-ray"/>
    <property type="resolution" value="2.90 A"/>
    <property type="chains" value="B=978-1025"/>
</dbReference>
<dbReference type="PDB" id="4WNG">
    <property type="method" value="X-ray"/>
    <property type="resolution" value="2.11 A"/>
    <property type="chains" value="B=978-1025"/>
</dbReference>
<dbReference type="PDB" id="7BYJ">
    <property type="method" value="X-ray"/>
    <property type="resolution" value="2.49 A"/>
    <property type="chains" value="A=193-527"/>
</dbReference>
<dbReference type="PDBsum" id="4WND"/>
<dbReference type="PDBsum" id="4WNE"/>
<dbReference type="PDBsum" id="4WNF"/>
<dbReference type="PDBsum" id="4WNG"/>
<dbReference type="PDBsum" id="7BYJ"/>
<dbReference type="SMR" id="Q14CM0"/>
<dbReference type="BioGRID" id="115105">
    <property type="interactions" value="9"/>
</dbReference>
<dbReference type="FunCoup" id="Q14CM0">
    <property type="interactions" value="41"/>
</dbReference>
<dbReference type="IntAct" id="Q14CM0">
    <property type="interactions" value="14"/>
</dbReference>
<dbReference type="MINT" id="Q14CM0"/>
<dbReference type="STRING" id="9606.ENSP00000370057"/>
<dbReference type="GlyGen" id="Q14CM0">
    <property type="glycosylation" value="3 sites, 1 O-linked glycan (2 sites)"/>
</dbReference>
<dbReference type="iPTMnet" id="Q14CM0"/>
<dbReference type="PhosphoSitePlus" id="Q14CM0"/>
<dbReference type="SwissPalm" id="Q14CM0"/>
<dbReference type="BioMuta" id="FRMPD4"/>
<dbReference type="DMDM" id="121948742"/>
<dbReference type="MassIVE" id="Q14CM0"/>
<dbReference type="PaxDb" id="9606-ENSP00000370057"/>
<dbReference type="PeptideAtlas" id="Q14CM0"/>
<dbReference type="ProteomicsDB" id="60327"/>
<dbReference type="Antibodypedia" id="49701">
    <property type="antibodies" value="39 antibodies from 18 providers"/>
</dbReference>
<dbReference type="DNASU" id="9758"/>
<dbReference type="Ensembl" id="ENST00000380682.5">
    <property type="protein sequence ID" value="ENSP00000370057.1"/>
    <property type="gene ID" value="ENSG00000169933.17"/>
</dbReference>
<dbReference type="GeneID" id="9758"/>
<dbReference type="KEGG" id="hsa:9758"/>
<dbReference type="UCSC" id="uc004cuz.2">
    <property type="organism name" value="human"/>
</dbReference>
<dbReference type="AGR" id="HGNC:29007"/>
<dbReference type="CTD" id="9758"/>
<dbReference type="DisGeNET" id="9758"/>
<dbReference type="GeneCards" id="FRMPD4"/>
<dbReference type="HGNC" id="HGNC:29007">
    <property type="gene designation" value="FRMPD4"/>
</dbReference>
<dbReference type="HPA" id="ENSG00000169933">
    <property type="expression patterns" value="Group enriched (brain, parathyroid gland, retina)"/>
</dbReference>
<dbReference type="MalaCards" id="FRMPD4"/>
<dbReference type="MIM" id="300838">
    <property type="type" value="gene"/>
</dbReference>
<dbReference type="MIM" id="300983">
    <property type="type" value="phenotype"/>
</dbReference>
<dbReference type="neXtProt" id="NX_Q14CM0"/>
<dbReference type="OpenTargets" id="ENSG00000169933"/>
<dbReference type="Orphanet" id="777">
    <property type="disease" value="X-linked non-syndromic intellectual disability"/>
</dbReference>
<dbReference type="PharmGKB" id="PA134977575"/>
<dbReference type="VEuPathDB" id="HostDB:ENSG00000169933"/>
<dbReference type="eggNOG" id="KOG3552">
    <property type="taxonomic scope" value="Eukaryota"/>
</dbReference>
<dbReference type="GeneTree" id="ENSGT00950000183035"/>
<dbReference type="HOGENOM" id="CLU_002690_0_0_1"/>
<dbReference type="InParanoid" id="Q14CM0"/>
<dbReference type="OrthoDB" id="5859304at2759"/>
<dbReference type="PAN-GO" id="Q14CM0">
    <property type="GO annotations" value="2 GO annotations based on evolutionary models"/>
</dbReference>
<dbReference type="PhylomeDB" id="Q14CM0"/>
<dbReference type="TreeFam" id="TF316497"/>
<dbReference type="PathwayCommons" id="Q14CM0"/>
<dbReference type="SignaLink" id="Q14CM0"/>
<dbReference type="BioGRID-ORCS" id="9758">
    <property type="hits" value="10 hits in 765 CRISPR screens"/>
</dbReference>
<dbReference type="ChiTaRS" id="FRMPD4">
    <property type="organism name" value="human"/>
</dbReference>
<dbReference type="EvolutionaryTrace" id="Q14CM0"/>
<dbReference type="GenomeRNAi" id="9758"/>
<dbReference type="Pharos" id="Q14CM0">
    <property type="development level" value="Tbio"/>
</dbReference>
<dbReference type="PRO" id="PR:Q14CM0"/>
<dbReference type="Proteomes" id="UP000005640">
    <property type="component" value="Chromosome X"/>
</dbReference>
<dbReference type="RNAct" id="Q14CM0">
    <property type="molecule type" value="protein"/>
</dbReference>
<dbReference type="Bgee" id="ENSG00000169933">
    <property type="expression patterns" value="Expressed in middle temporal gyrus and 84 other cell types or tissues"/>
</dbReference>
<dbReference type="ExpressionAtlas" id="Q14CM0">
    <property type="expression patterns" value="baseline and differential"/>
</dbReference>
<dbReference type="GO" id="GO:0005856">
    <property type="term" value="C:cytoskeleton"/>
    <property type="evidence" value="ECO:0007669"/>
    <property type="project" value="InterPro"/>
</dbReference>
<dbReference type="GO" id="GO:0043197">
    <property type="term" value="C:dendritic spine"/>
    <property type="evidence" value="ECO:0000314"/>
    <property type="project" value="UniProtKB"/>
</dbReference>
<dbReference type="GO" id="GO:0032991">
    <property type="term" value="C:protein-containing complex"/>
    <property type="evidence" value="ECO:0000314"/>
    <property type="project" value="UniProtKB"/>
</dbReference>
<dbReference type="GO" id="GO:0005546">
    <property type="term" value="F:phosphatidylinositol-4,5-bisphosphate binding"/>
    <property type="evidence" value="ECO:0000314"/>
    <property type="project" value="UniProtKB"/>
</dbReference>
<dbReference type="GO" id="GO:0051835">
    <property type="term" value="P:positive regulation of synapse structural plasticity"/>
    <property type="evidence" value="ECO:0000315"/>
    <property type="project" value="UniProtKB"/>
</dbReference>
<dbReference type="CDD" id="cd14473">
    <property type="entry name" value="FERM_B-lobe"/>
    <property type="match status" value="1"/>
</dbReference>
<dbReference type="CDD" id="cd13183">
    <property type="entry name" value="FERM_C_FRMPD1_FRMPD3_FRMPD4"/>
    <property type="match status" value="1"/>
</dbReference>
<dbReference type="CDD" id="cd17170">
    <property type="entry name" value="FERM_F1_FRMPD4"/>
    <property type="match status" value="1"/>
</dbReference>
<dbReference type="CDD" id="cd21943">
    <property type="entry name" value="LGNbd_FRMPD4"/>
    <property type="match status" value="1"/>
</dbReference>
<dbReference type="CDD" id="cd06769">
    <property type="entry name" value="PDZ_FRMPD1_3_4-like"/>
    <property type="match status" value="1"/>
</dbReference>
<dbReference type="CDD" id="cd00201">
    <property type="entry name" value="WW"/>
    <property type="match status" value="1"/>
</dbReference>
<dbReference type="FunFam" id="1.20.80.10:FF:000009">
    <property type="entry name" value="FERM and PDZ domain containing 4"/>
    <property type="match status" value="1"/>
</dbReference>
<dbReference type="FunFam" id="2.20.70.10:FF:000057">
    <property type="entry name" value="FERM and PDZ domain-containing protein 4"/>
    <property type="match status" value="1"/>
</dbReference>
<dbReference type="FunFam" id="2.30.29.30:FF:000066">
    <property type="entry name" value="FERM and PDZ domain-containing protein 4"/>
    <property type="match status" value="1"/>
</dbReference>
<dbReference type="FunFam" id="2.30.42.10:FF:000053">
    <property type="entry name" value="FERM and PDZ domain-containing protein 4"/>
    <property type="match status" value="1"/>
</dbReference>
<dbReference type="Gene3D" id="1.20.80.10">
    <property type="match status" value="1"/>
</dbReference>
<dbReference type="Gene3D" id="2.20.70.10">
    <property type="match status" value="1"/>
</dbReference>
<dbReference type="Gene3D" id="2.30.42.10">
    <property type="match status" value="1"/>
</dbReference>
<dbReference type="Gene3D" id="3.10.20.90">
    <property type="entry name" value="Phosphatidylinositol 3-kinase Catalytic Subunit, Chain A, domain 1"/>
    <property type="match status" value="1"/>
</dbReference>
<dbReference type="Gene3D" id="2.30.29.30">
    <property type="entry name" value="Pleckstrin-homology domain (PH domain)/Phosphotyrosine-binding domain (PTB)"/>
    <property type="match status" value="1"/>
</dbReference>
<dbReference type="InterPro" id="IPR019749">
    <property type="entry name" value="Band_41_domain"/>
</dbReference>
<dbReference type="InterPro" id="IPR049385">
    <property type="entry name" value="FAK1-like_FERM_C"/>
</dbReference>
<dbReference type="InterPro" id="IPR014352">
    <property type="entry name" value="FERM/acyl-CoA-bd_prot_sf"/>
</dbReference>
<dbReference type="InterPro" id="IPR035963">
    <property type="entry name" value="FERM_2"/>
</dbReference>
<dbReference type="InterPro" id="IPR019748">
    <property type="entry name" value="FERM_central"/>
</dbReference>
<dbReference type="InterPro" id="IPR000299">
    <property type="entry name" value="FERM_domain"/>
</dbReference>
<dbReference type="InterPro" id="IPR041779">
    <property type="entry name" value="FRMPD1/3/4_FERM_C"/>
</dbReference>
<dbReference type="InterPro" id="IPR001478">
    <property type="entry name" value="PDZ"/>
</dbReference>
<dbReference type="InterPro" id="IPR036034">
    <property type="entry name" value="PDZ_sf"/>
</dbReference>
<dbReference type="InterPro" id="IPR011993">
    <property type="entry name" value="PH-like_dom_sf"/>
</dbReference>
<dbReference type="InterPro" id="IPR029071">
    <property type="entry name" value="Ubiquitin-like_domsf"/>
</dbReference>
<dbReference type="InterPro" id="IPR001202">
    <property type="entry name" value="WW_dom"/>
</dbReference>
<dbReference type="PANTHER" id="PTHR46221:SF4">
    <property type="entry name" value="FERM AND PDZ DOMAIN-CONTAINING PROTEIN 4"/>
    <property type="match status" value="1"/>
</dbReference>
<dbReference type="PANTHER" id="PTHR46221">
    <property type="entry name" value="FERM AND PDZ DOMAIN-CONTAINING PROTEIN FAMILY MEMBER"/>
    <property type="match status" value="1"/>
</dbReference>
<dbReference type="Pfam" id="PF21477">
    <property type="entry name" value="FERM_C_FAK1"/>
    <property type="match status" value="1"/>
</dbReference>
<dbReference type="Pfam" id="PF00373">
    <property type="entry name" value="FERM_M"/>
    <property type="match status" value="1"/>
</dbReference>
<dbReference type="Pfam" id="PF00595">
    <property type="entry name" value="PDZ"/>
    <property type="match status" value="1"/>
</dbReference>
<dbReference type="SMART" id="SM00295">
    <property type="entry name" value="B41"/>
    <property type="match status" value="1"/>
</dbReference>
<dbReference type="SMART" id="SM00228">
    <property type="entry name" value="PDZ"/>
    <property type="match status" value="1"/>
</dbReference>
<dbReference type="SUPFAM" id="SSF50156">
    <property type="entry name" value="PDZ domain-like"/>
    <property type="match status" value="1"/>
</dbReference>
<dbReference type="SUPFAM" id="SSF50729">
    <property type="entry name" value="PH domain-like"/>
    <property type="match status" value="1"/>
</dbReference>
<dbReference type="SUPFAM" id="SSF47031">
    <property type="entry name" value="Second domain of FERM"/>
    <property type="match status" value="1"/>
</dbReference>
<dbReference type="SUPFAM" id="SSF54236">
    <property type="entry name" value="Ubiquitin-like"/>
    <property type="match status" value="1"/>
</dbReference>
<dbReference type="PROSITE" id="PS50057">
    <property type="entry name" value="FERM_3"/>
    <property type="match status" value="1"/>
</dbReference>
<dbReference type="PROSITE" id="PS50106">
    <property type="entry name" value="PDZ"/>
    <property type="match status" value="1"/>
</dbReference>
<dbReference type="PROSITE" id="PS50020">
    <property type="entry name" value="WW_DOMAIN_2"/>
    <property type="match status" value="1"/>
</dbReference>
<comment type="function">
    <text evidence="5">Positive regulator of dendritic spine morphogenesis and density. Required for the maintenance of excitatory synaptic transmission. Binds phosphatidylinositol 4,5-bisphosphate.</text>
</comment>
<comment type="subunit">
    <text evidence="5 7">Interacts (via C-terminus) with DLG1, DLG2, DLG3 and DLG4/PSD95. Interacts (via N-terminus) with ARHGEF7; the interaction is mediated by the PDZ domain (PubMed:19118189). Interacts with GPSM2 (via TPR repeat region) (PubMed:25664792).</text>
</comment>
<comment type="interaction">
    <interactant intactId="EBI-311279">
        <id>Q14CM0</id>
    </interactant>
    <interactant intactId="EBI-357481">
        <id>Q12959</id>
        <label>DLG1</label>
    </interactant>
    <organismsDiffer>false</organismsDiffer>
    <experiments>4</experiments>
</comment>
<comment type="interaction">
    <interactant intactId="EBI-311279">
        <id>Q14CM0</id>
    </interactant>
    <interactant intactId="EBI-357345">
        <id>Q14160</id>
        <label>SCRIB</label>
    </interactant>
    <organismsDiffer>false</organismsDiffer>
    <experiments>2</experiments>
</comment>
<comment type="interaction">
    <interactant intactId="EBI-311279">
        <id>Q14CM0</id>
    </interactant>
    <interactant intactId="EBI-4410552">
        <id>Q9Z214-1</id>
        <label>Homer1</label>
    </interactant>
    <organismsDiffer>true</organismsDiffer>
    <experiments>2</experiments>
</comment>
<comment type="subcellular location">
    <subcellularLocation>
        <location evidence="5">Cell projection</location>
        <location evidence="5">Dendritic spine</location>
    </subcellularLocation>
</comment>
<comment type="domain">
    <text evidence="5">The FERM domain mediates the interaction with phosphatidylinositol 4,5-bisphosphate.</text>
</comment>
<comment type="disease" evidence="6">
    <disease id="DI-04815">
        <name>Intellectual developmental disorder, X-linked 104</name>
        <acronym>XLID104</acronym>
        <description>A form of intellectual disability, a disorder characterized by significantly below average general intellectual functioning associated with impairments in adaptive behavior and manifested during the developmental period. Intellectual deficiency is the only primary symptom of non-syndromic X-linked forms, while syndromic forms present with associated physical, neurological and/or psychiatric manifestations.</description>
        <dbReference type="MIM" id="300983"/>
    </disease>
    <text>The disease is caused by variants affecting the gene represented in this entry.</text>
</comment>
<accession>Q14CM0</accession>
<accession>A8K0X9</accession>
<accession>O15032</accession>
<keyword id="KW-0002">3D-structure</keyword>
<keyword id="KW-0966">Cell projection</keyword>
<keyword id="KW-0225">Disease variant</keyword>
<keyword id="KW-0991">Intellectual disability</keyword>
<keyword id="KW-0446">Lipid-binding</keyword>
<keyword id="KW-1267">Proteomics identification</keyword>
<keyword id="KW-1185">Reference proteome</keyword>
<keyword id="KW-0770">Synapse</keyword>